<gene>
    <name evidence="6" type="primary">MARCHF4</name>
    <name type="synonym">KIAA1399</name>
    <name type="synonym">MARCH4</name>
    <name type="synonym">RNF174</name>
</gene>
<keyword id="KW-0333">Golgi apparatus</keyword>
<keyword id="KW-0472">Membrane</keyword>
<keyword id="KW-0479">Metal-binding</keyword>
<keyword id="KW-1185">Reference proteome</keyword>
<keyword id="KW-0732">Signal</keyword>
<keyword id="KW-0808">Transferase</keyword>
<keyword id="KW-0812">Transmembrane</keyword>
<keyword id="KW-1133">Transmembrane helix</keyword>
<keyword id="KW-0833">Ubl conjugation pathway</keyword>
<keyword id="KW-0862">Zinc</keyword>
<keyword id="KW-0863">Zinc-finger</keyword>
<protein>
    <recommendedName>
        <fullName>E3 ubiquitin-protein ligase MARCHF4</fullName>
        <ecNumber>2.3.2.27</ecNumber>
    </recommendedName>
    <alternativeName>
        <fullName>Membrane-associated RING finger protein 4</fullName>
    </alternativeName>
    <alternativeName>
        <fullName>Membrane-associated RING-CH protein IV</fullName>
        <shortName>MARCH-IV</shortName>
    </alternativeName>
    <alternativeName>
        <fullName>RING finger protein 174</fullName>
    </alternativeName>
    <alternativeName>
        <fullName evidence="5">RING-type E3 ubiquitin transferase MARCHF4</fullName>
    </alternativeName>
</protein>
<accession>Q9P2E8</accession>
<accession>Q4KMN7</accession>
<accession>Q86WR8</accession>
<reference key="1">
    <citation type="journal article" date="2000" name="DNA Res.">
        <title>Prediction of the coding sequences of unidentified human genes. XVI. The complete sequences of 150 new cDNA clones from brain which code for large proteins in vitro.</title>
        <authorList>
            <person name="Nagase T."/>
            <person name="Kikuno R."/>
            <person name="Ishikawa K."/>
            <person name="Hirosawa M."/>
            <person name="Ohara O."/>
        </authorList>
    </citation>
    <scope>NUCLEOTIDE SEQUENCE [LARGE SCALE MRNA]</scope>
    <source>
        <tissue>Brain</tissue>
    </source>
</reference>
<reference key="2">
    <citation type="journal article" date="2004" name="Genome Res.">
        <title>The status, quality, and expansion of the NIH full-length cDNA project: the Mammalian Gene Collection (MGC).</title>
        <authorList>
            <consortium name="The MGC Project Team"/>
        </authorList>
    </citation>
    <scope>NUCLEOTIDE SEQUENCE [LARGE SCALE MRNA]</scope>
    <source>
        <tissue>Liver</tissue>
        <tissue>Pancreas</tissue>
    </source>
</reference>
<reference key="3">
    <citation type="journal article" date="2004" name="J. Virol.">
        <title>Downregulation of major histocompatibility complex class I by human ubiquitin ligases related to viral immune evasion proteins.</title>
        <authorList>
            <person name="Bartee E."/>
            <person name="Mansouri M."/>
            <person name="Hovey Nerenberg B.T."/>
            <person name="Gouveia K."/>
            <person name="Frueh K."/>
        </authorList>
    </citation>
    <scope>FUNCTION</scope>
    <scope>TISSUE SPECIFICITY</scope>
    <scope>SUBCELLULAR LOCATION</scope>
</reference>
<proteinExistence type="evidence at transcript level"/>
<feature type="signal peptide" evidence="1">
    <location>
        <begin position="1"/>
        <end position="18"/>
    </location>
</feature>
<feature type="chain" id="PRO_0000055930" description="E3 ubiquitin-protein ligase MARCHF4">
    <location>
        <begin position="19"/>
        <end position="410"/>
    </location>
</feature>
<feature type="transmembrane region" description="Helical" evidence="1">
    <location>
        <begin position="238"/>
        <end position="258"/>
    </location>
</feature>
<feature type="transmembrane region" description="Helical" evidence="1">
    <location>
        <begin position="272"/>
        <end position="292"/>
    </location>
</feature>
<feature type="zinc finger region" description="RING-CH-type" evidence="2">
    <location>
        <begin position="155"/>
        <end position="215"/>
    </location>
</feature>
<feature type="region of interest" description="Disordered" evidence="3">
    <location>
        <begin position="92"/>
        <end position="136"/>
    </location>
</feature>
<feature type="region of interest" description="Disordered" evidence="3">
    <location>
        <begin position="324"/>
        <end position="372"/>
    </location>
</feature>
<feature type="region of interest" description="Disordered" evidence="3">
    <location>
        <begin position="390"/>
        <end position="410"/>
    </location>
</feature>
<feature type="compositionally biased region" description="Pro residues" evidence="3">
    <location>
        <begin position="100"/>
        <end position="112"/>
    </location>
</feature>
<feature type="compositionally biased region" description="Low complexity" evidence="3">
    <location>
        <begin position="126"/>
        <end position="136"/>
    </location>
</feature>
<feature type="compositionally biased region" description="Polar residues" evidence="3">
    <location>
        <begin position="333"/>
        <end position="346"/>
    </location>
</feature>
<feature type="compositionally biased region" description="Low complexity" evidence="3">
    <location>
        <begin position="352"/>
        <end position="366"/>
    </location>
</feature>
<feature type="binding site" evidence="2">
    <location>
        <position position="163"/>
    </location>
    <ligand>
        <name>Zn(2+)</name>
        <dbReference type="ChEBI" id="CHEBI:29105"/>
        <label>1</label>
    </ligand>
</feature>
<feature type="binding site" evidence="2">
    <location>
        <position position="166"/>
    </location>
    <ligand>
        <name>Zn(2+)</name>
        <dbReference type="ChEBI" id="CHEBI:29105"/>
        <label>1</label>
    </ligand>
</feature>
<feature type="binding site" evidence="2">
    <location>
        <position position="179"/>
    </location>
    <ligand>
        <name>Zn(2+)</name>
        <dbReference type="ChEBI" id="CHEBI:29105"/>
        <label>2</label>
    </ligand>
</feature>
<feature type="binding site" evidence="2">
    <location>
        <position position="181"/>
    </location>
    <ligand>
        <name>Zn(2+)</name>
        <dbReference type="ChEBI" id="CHEBI:29105"/>
        <label>2</label>
    </ligand>
</feature>
<feature type="binding site" evidence="2">
    <location>
        <position position="189"/>
    </location>
    <ligand>
        <name>Zn(2+)</name>
        <dbReference type="ChEBI" id="CHEBI:29105"/>
        <label>1</label>
    </ligand>
</feature>
<feature type="binding site" evidence="2">
    <location>
        <position position="192"/>
    </location>
    <ligand>
        <name>Zn(2+)</name>
        <dbReference type="ChEBI" id="CHEBI:29105"/>
        <label>1</label>
    </ligand>
</feature>
<feature type="binding site" evidence="2">
    <location>
        <position position="205"/>
    </location>
    <ligand>
        <name>Zn(2+)</name>
        <dbReference type="ChEBI" id="CHEBI:29105"/>
        <label>2</label>
    </ligand>
</feature>
<feature type="binding site" evidence="2">
    <location>
        <position position="208"/>
    </location>
    <ligand>
        <name>Zn(2+)</name>
        <dbReference type="ChEBI" id="CHEBI:29105"/>
        <label>2</label>
    </ligand>
</feature>
<name>MARH4_HUMAN</name>
<evidence type="ECO:0000255" key="1"/>
<evidence type="ECO:0000255" key="2">
    <source>
        <dbReference type="PROSITE-ProRule" id="PRU00623"/>
    </source>
</evidence>
<evidence type="ECO:0000256" key="3">
    <source>
        <dbReference type="SAM" id="MobiDB-lite"/>
    </source>
</evidence>
<evidence type="ECO:0000269" key="4">
    <source>
    </source>
</evidence>
<evidence type="ECO:0000305" key="5"/>
<evidence type="ECO:0000312" key="6">
    <source>
        <dbReference type="HGNC" id="HGNC:29269"/>
    </source>
</evidence>
<sequence length="410" mass="45528">MLMPLCGLLWWWWCCCSGWYCYGLCAPAPQMLRHQGLLKCRCRMLFNDLKVFLLRRPPQAPLPMHGDPQPPGLAANNTLPALGAGGWAGWRGPREVVGREPPPVPPPPPLPPSSVEDDWGGPATEPPASLLSSASSDDFCKEKTEDRYSLGSSLDSGMRTPLCRICFQGPEQGELLSPCRCDGSVKCTHQPCLIKWISERGCWSCELCYYKYHVIAISTKNPLQWQAISLTVIEKVQVAAAILGSLFLIASISWLIWSTFSPSARWQRQDLLFQICYGMYGFMDVVCIGLIIHEGPSVYRIFKRWQAVNQQWKVLNYDKTKDLEDQKAGGRTNPRTSSSTQANIPSSEEETAGTPAPEQGPAQAAGHPSGPLSHHHCAYTILHILSHLRPHEQRSPPGSSRELVMRVTTV</sequence>
<comment type="function">
    <text evidence="4">E3 ubiquitin-protein ligase that may mediate ubiquitination of MHC-I and CD4, and promote their subsequent endocytosis and sorting to lysosomes via multivesicular bodies. E3 ubiquitin ligases accept ubiquitin from an E2 ubiquitin-conjugating enzyme in the form of a thioester and then directly transfer the ubiquitin to targeted substrates.</text>
</comment>
<comment type="catalytic activity">
    <reaction>
        <text>S-ubiquitinyl-[E2 ubiquitin-conjugating enzyme]-L-cysteine + [acceptor protein]-L-lysine = [E2 ubiquitin-conjugating enzyme]-L-cysteine + N(6)-ubiquitinyl-[acceptor protein]-L-lysine.</text>
        <dbReference type="EC" id="2.3.2.27"/>
    </reaction>
</comment>
<comment type="pathway">
    <text>Protein modification; protein ubiquitination.</text>
</comment>
<comment type="subcellular location">
    <subcellularLocation>
        <location evidence="4">Golgi apparatus membrane</location>
        <topology evidence="4">Multi-pass membrane protein</topology>
    </subcellularLocation>
</comment>
<comment type="tissue specificity">
    <text evidence="4">Expressed in brain and placenta.</text>
</comment>
<comment type="domain">
    <text>The RING-CH-type zinc finger domain is required for E3 ligase activity.</text>
</comment>
<comment type="sequence caution" evidence="5">
    <conflict type="erroneous initiation">
        <sequence resource="EMBL-CDS" id="BAA92637"/>
    </conflict>
    <text>Extended N-terminus.</text>
</comment>
<dbReference type="EC" id="2.3.2.27"/>
<dbReference type="EMBL" id="AB037820">
    <property type="protein sequence ID" value="BAA92637.1"/>
    <property type="status" value="ALT_INIT"/>
    <property type="molecule type" value="mRNA"/>
</dbReference>
<dbReference type="EMBL" id="BC048793">
    <property type="protein sequence ID" value="AAH48793.1"/>
    <property type="molecule type" value="mRNA"/>
</dbReference>
<dbReference type="EMBL" id="BC098448">
    <property type="protein sequence ID" value="AAH98448.1"/>
    <property type="molecule type" value="mRNA"/>
</dbReference>
<dbReference type="CCDS" id="CCDS33376.1"/>
<dbReference type="RefSeq" id="NP_065865.1">
    <property type="nucleotide sequence ID" value="NM_020814.3"/>
</dbReference>
<dbReference type="BioGRID" id="121627">
    <property type="interactions" value="129"/>
</dbReference>
<dbReference type="FunCoup" id="Q9P2E8">
    <property type="interactions" value="241"/>
</dbReference>
<dbReference type="IntAct" id="Q9P2E8">
    <property type="interactions" value="74"/>
</dbReference>
<dbReference type="STRING" id="9606.ENSP00000273067"/>
<dbReference type="iPTMnet" id="Q9P2E8"/>
<dbReference type="PhosphoSitePlus" id="Q9P2E8"/>
<dbReference type="BioMuta" id="MARCH4"/>
<dbReference type="DMDM" id="59798475"/>
<dbReference type="PaxDb" id="9606-ENSP00000273067"/>
<dbReference type="PeptideAtlas" id="Q9P2E8"/>
<dbReference type="Antibodypedia" id="3020">
    <property type="antibodies" value="176 antibodies from 27 providers"/>
</dbReference>
<dbReference type="DNASU" id="57574"/>
<dbReference type="Ensembl" id="ENST00000273067.5">
    <property type="protein sequence ID" value="ENSP00000273067.3"/>
    <property type="gene ID" value="ENSG00000144583.5"/>
</dbReference>
<dbReference type="GeneID" id="57574"/>
<dbReference type="KEGG" id="hsa:57574"/>
<dbReference type="MANE-Select" id="ENST00000273067.5">
    <property type="protein sequence ID" value="ENSP00000273067.3"/>
    <property type="RefSeq nucleotide sequence ID" value="NM_020814.3"/>
    <property type="RefSeq protein sequence ID" value="NP_065865.1"/>
</dbReference>
<dbReference type="UCSC" id="uc002vgb.4">
    <property type="organism name" value="human"/>
</dbReference>
<dbReference type="AGR" id="HGNC:29269"/>
<dbReference type="CTD" id="57574"/>
<dbReference type="DisGeNET" id="57574"/>
<dbReference type="GeneCards" id="MARCHF4"/>
<dbReference type="HGNC" id="HGNC:29269">
    <property type="gene designation" value="MARCHF4"/>
</dbReference>
<dbReference type="HPA" id="ENSG00000144583">
    <property type="expression patterns" value="Group enriched (brain, pituitary gland)"/>
</dbReference>
<dbReference type="MIM" id="608208">
    <property type="type" value="gene"/>
</dbReference>
<dbReference type="neXtProt" id="NX_Q9P2E8"/>
<dbReference type="OpenTargets" id="ENSG00000144583"/>
<dbReference type="VEuPathDB" id="HostDB:ENSG00000144583"/>
<dbReference type="eggNOG" id="KOG1609">
    <property type="taxonomic scope" value="Eukaryota"/>
</dbReference>
<dbReference type="GeneTree" id="ENSGT00940000158179"/>
<dbReference type="HOGENOM" id="CLU_045217_0_1_1"/>
<dbReference type="InParanoid" id="Q9P2E8"/>
<dbReference type="OMA" id="CCGLCTP"/>
<dbReference type="OrthoDB" id="264354at2759"/>
<dbReference type="PAN-GO" id="Q9P2E8">
    <property type="GO annotations" value="3 GO annotations based on evolutionary models"/>
</dbReference>
<dbReference type="PhylomeDB" id="Q9P2E8"/>
<dbReference type="TreeFam" id="TF319557"/>
<dbReference type="PathwayCommons" id="Q9P2E8"/>
<dbReference type="SignaLink" id="Q9P2E8"/>
<dbReference type="SIGNOR" id="Q9P2E8"/>
<dbReference type="UniPathway" id="UPA00143"/>
<dbReference type="BioGRID-ORCS" id="57574">
    <property type="hits" value="11 hits in 1117 CRISPR screens"/>
</dbReference>
<dbReference type="ChiTaRS" id="MARCH4">
    <property type="organism name" value="human"/>
</dbReference>
<dbReference type="GenomeRNAi" id="57574"/>
<dbReference type="Pharos" id="Q9P2E8">
    <property type="development level" value="Tbio"/>
</dbReference>
<dbReference type="PRO" id="PR:Q9P2E8"/>
<dbReference type="Proteomes" id="UP000005640">
    <property type="component" value="Chromosome 2"/>
</dbReference>
<dbReference type="RNAct" id="Q9P2E8">
    <property type="molecule type" value="protein"/>
</dbReference>
<dbReference type="Bgee" id="ENSG00000144583">
    <property type="expression patterns" value="Expressed in cortical plate and 59 other cell types or tissues"/>
</dbReference>
<dbReference type="GO" id="GO:0000139">
    <property type="term" value="C:Golgi membrane"/>
    <property type="evidence" value="ECO:0007669"/>
    <property type="project" value="UniProtKB-SubCell"/>
</dbReference>
<dbReference type="GO" id="GO:0005795">
    <property type="term" value="C:Golgi stack"/>
    <property type="evidence" value="ECO:0000314"/>
    <property type="project" value="UniProtKB"/>
</dbReference>
<dbReference type="GO" id="GO:0005802">
    <property type="term" value="C:trans-Golgi network"/>
    <property type="evidence" value="ECO:0000314"/>
    <property type="project" value="UniProtKB"/>
</dbReference>
<dbReference type="GO" id="GO:0004842">
    <property type="term" value="F:ubiquitin-protein transferase activity"/>
    <property type="evidence" value="ECO:0000314"/>
    <property type="project" value="UniProtKB"/>
</dbReference>
<dbReference type="GO" id="GO:0008270">
    <property type="term" value="F:zinc ion binding"/>
    <property type="evidence" value="ECO:0007669"/>
    <property type="project" value="UniProtKB-KW"/>
</dbReference>
<dbReference type="GO" id="GO:0016567">
    <property type="term" value="P:protein ubiquitination"/>
    <property type="evidence" value="ECO:0007669"/>
    <property type="project" value="UniProtKB-UniPathway"/>
</dbReference>
<dbReference type="CDD" id="cd16824">
    <property type="entry name" value="RING_CH-C4HC3_MARCH4"/>
    <property type="match status" value="1"/>
</dbReference>
<dbReference type="FunFam" id="3.30.40.10:FF:000209">
    <property type="entry name" value="E3 ubiquitin-protein ligase MARCH4"/>
    <property type="match status" value="1"/>
</dbReference>
<dbReference type="Gene3D" id="3.30.40.10">
    <property type="entry name" value="Zinc/RING finger domain, C3HC4 (zinc finger)"/>
    <property type="match status" value="1"/>
</dbReference>
<dbReference type="InterPro" id="IPR046356">
    <property type="entry name" value="MARCHF4/9/11"/>
</dbReference>
<dbReference type="InterPro" id="IPR047905">
    <property type="entry name" value="MARCHF4_RING_CH-C4HC3"/>
</dbReference>
<dbReference type="InterPro" id="IPR011016">
    <property type="entry name" value="Znf_RING-CH"/>
</dbReference>
<dbReference type="InterPro" id="IPR013083">
    <property type="entry name" value="Znf_RING/FYVE/PHD"/>
</dbReference>
<dbReference type="PANTHER" id="PTHR46053">
    <property type="entry name" value="E3 UBIQUITIN-PROTEIN LIGASE MARCH4-LIKE"/>
    <property type="match status" value="1"/>
</dbReference>
<dbReference type="PANTHER" id="PTHR46053:SF3">
    <property type="entry name" value="E3 UBIQUITIN-PROTEIN LIGASE MARCHF4"/>
    <property type="match status" value="1"/>
</dbReference>
<dbReference type="Pfam" id="PF12906">
    <property type="entry name" value="RINGv"/>
    <property type="match status" value="1"/>
</dbReference>
<dbReference type="SMART" id="SM00744">
    <property type="entry name" value="RINGv"/>
    <property type="match status" value="1"/>
</dbReference>
<dbReference type="SUPFAM" id="SSF57850">
    <property type="entry name" value="RING/U-box"/>
    <property type="match status" value="1"/>
</dbReference>
<dbReference type="PROSITE" id="PS51292">
    <property type="entry name" value="ZF_RING_CH"/>
    <property type="match status" value="1"/>
</dbReference>
<organism>
    <name type="scientific">Homo sapiens</name>
    <name type="common">Human</name>
    <dbReference type="NCBI Taxonomy" id="9606"/>
    <lineage>
        <taxon>Eukaryota</taxon>
        <taxon>Metazoa</taxon>
        <taxon>Chordata</taxon>
        <taxon>Craniata</taxon>
        <taxon>Vertebrata</taxon>
        <taxon>Euteleostomi</taxon>
        <taxon>Mammalia</taxon>
        <taxon>Eutheria</taxon>
        <taxon>Euarchontoglires</taxon>
        <taxon>Primates</taxon>
        <taxon>Haplorrhini</taxon>
        <taxon>Catarrhini</taxon>
        <taxon>Hominidae</taxon>
        <taxon>Homo</taxon>
    </lineage>
</organism>